<organism>
    <name type="scientific">Bordetella avium (strain 197N)</name>
    <dbReference type="NCBI Taxonomy" id="360910"/>
    <lineage>
        <taxon>Bacteria</taxon>
        <taxon>Pseudomonadati</taxon>
        <taxon>Pseudomonadota</taxon>
        <taxon>Betaproteobacteria</taxon>
        <taxon>Burkholderiales</taxon>
        <taxon>Alcaligenaceae</taxon>
        <taxon>Bordetella</taxon>
    </lineage>
</organism>
<evidence type="ECO:0000255" key="1">
    <source>
        <dbReference type="HAMAP-Rule" id="MF_01632"/>
    </source>
</evidence>
<protein>
    <recommendedName>
        <fullName evidence="1">Probable chorismate pyruvate-lyase</fullName>
        <shortName evidence="1">CL</shortName>
        <shortName evidence="1">CPL</shortName>
        <ecNumber evidence="1">4.1.3.40</ecNumber>
    </recommendedName>
</protein>
<name>UBIC_BORA1</name>
<reference key="1">
    <citation type="journal article" date="2006" name="J. Bacteriol.">
        <title>Comparison of the genome sequence of the poultry pathogen Bordetella avium with those of B. bronchiseptica, B. pertussis, and B. parapertussis reveals extensive diversity in surface structures associated with host interaction.</title>
        <authorList>
            <person name="Sebaihia M."/>
            <person name="Preston A."/>
            <person name="Maskell D.J."/>
            <person name="Kuzmiak H."/>
            <person name="Connell T.D."/>
            <person name="King N.D."/>
            <person name="Orndorff P.E."/>
            <person name="Miyamoto D.M."/>
            <person name="Thomson N.R."/>
            <person name="Harris D."/>
            <person name="Goble A."/>
            <person name="Lord A."/>
            <person name="Murphy L."/>
            <person name="Quail M.A."/>
            <person name="Rutter S."/>
            <person name="Squares R."/>
            <person name="Squares S."/>
            <person name="Woodward J."/>
            <person name="Parkhill J."/>
            <person name="Temple L.M."/>
        </authorList>
    </citation>
    <scope>NUCLEOTIDE SEQUENCE [LARGE SCALE GENOMIC DNA]</scope>
    <source>
        <strain>197N</strain>
    </source>
</reference>
<accession>Q2L1H6</accession>
<feature type="chain" id="PRO_0000240536" description="Probable chorismate pyruvate-lyase">
    <location>
        <begin position="1"/>
        <end position="198"/>
    </location>
</feature>
<feature type="binding site" evidence="1">
    <location>
        <position position="76"/>
    </location>
    <ligand>
        <name>substrate</name>
    </ligand>
</feature>
<feature type="binding site" evidence="1">
    <location>
        <position position="114"/>
    </location>
    <ligand>
        <name>substrate</name>
    </ligand>
</feature>
<feature type="binding site" evidence="1">
    <location>
        <position position="172"/>
    </location>
    <ligand>
        <name>substrate</name>
    </ligand>
</feature>
<sequence length="198" mass="22167">MTTKYQAPLAAGWLIRAPSLLSPTQRHWLFRPGALTAGLRQLGKVQLRVVSEHAEGASLDEARAMLIAPGSPVWVREVLMSVDGIDSVPARSLTPLAASHGSWQGMRRLLTRPLADMLYHDRGVTRSPFVCRRLSSPLPFYRMALPPNHDGSAIWARRSVFWRHGQPLLVAECFLPDFWRKVTLGRAIPPLKAHDRRA</sequence>
<dbReference type="EC" id="4.1.3.40" evidence="1"/>
<dbReference type="EMBL" id="AM167904">
    <property type="protein sequence ID" value="CAJ49258.1"/>
    <property type="molecule type" value="Genomic_DNA"/>
</dbReference>
<dbReference type="RefSeq" id="WP_012417319.1">
    <property type="nucleotide sequence ID" value="NC_010645.1"/>
</dbReference>
<dbReference type="SMR" id="Q2L1H6"/>
<dbReference type="STRING" id="360910.BAV1650"/>
<dbReference type="GeneID" id="92935288"/>
<dbReference type="KEGG" id="bav:BAV1650"/>
<dbReference type="eggNOG" id="COG3161">
    <property type="taxonomic scope" value="Bacteria"/>
</dbReference>
<dbReference type="HOGENOM" id="CLU_096824_0_0_4"/>
<dbReference type="OrthoDB" id="8606430at2"/>
<dbReference type="UniPathway" id="UPA00232"/>
<dbReference type="Proteomes" id="UP000001977">
    <property type="component" value="Chromosome"/>
</dbReference>
<dbReference type="GO" id="GO:0005829">
    <property type="term" value="C:cytosol"/>
    <property type="evidence" value="ECO:0007669"/>
    <property type="project" value="TreeGrafter"/>
</dbReference>
<dbReference type="GO" id="GO:0008813">
    <property type="term" value="F:chorismate lyase activity"/>
    <property type="evidence" value="ECO:0007669"/>
    <property type="project" value="UniProtKB-UniRule"/>
</dbReference>
<dbReference type="GO" id="GO:0042866">
    <property type="term" value="P:pyruvate biosynthetic process"/>
    <property type="evidence" value="ECO:0007669"/>
    <property type="project" value="UniProtKB-UniRule"/>
</dbReference>
<dbReference type="GO" id="GO:0006744">
    <property type="term" value="P:ubiquinone biosynthetic process"/>
    <property type="evidence" value="ECO:0007669"/>
    <property type="project" value="UniProtKB-UniRule"/>
</dbReference>
<dbReference type="Gene3D" id="3.40.1410.10">
    <property type="entry name" value="Chorismate lyase-like"/>
    <property type="match status" value="1"/>
</dbReference>
<dbReference type="HAMAP" id="MF_01632">
    <property type="entry name" value="UbiC"/>
    <property type="match status" value="1"/>
</dbReference>
<dbReference type="InterPro" id="IPR007440">
    <property type="entry name" value="Chorismate--pyruvate_lyase"/>
</dbReference>
<dbReference type="InterPro" id="IPR028978">
    <property type="entry name" value="Chorismate_lyase_/UTRA_dom_sf"/>
</dbReference>
<dbReference type="PANTHER" id="PTHR38683">
    <property type="entry name" value="CHORISMATE PYRUVATE-LYASE"/>
    <property type="match status" value="1"/>
</dbReference>
<dbReference type="PANTHER" id="PTHR38683:SF1">
    <property type="entry name" value="CHORISMATE PYRUVATE-LYASE"/>
    <property type="match status" value="1"/>
</dbReference>
<dbReference type="Pfam" id="PF04345">
    <property type="entry name" value="Chor_lyase"/>
    <property type="match status" value="1"/>
</dbReference>
<dbReference type="SUPFAM" id="SSF64288">
    <property type="entry name" value="Chorismate lyase-like"/>
    <property type="match status" value="1"/>
</dbReference>
<keyword id="KW-0963">Cytoplasm</keyword>
<keyword id="KW-0456">Lyase</keyword>
<keyword id="KW-0670">Pyruvate</keyword>
<keyword id="KW-1185">Reference proteome</keyword>
<keyword id="KW-0831">Ubiquinone biosynthesis</keyword>
<gene>
    <name evidence="1" type="primary">ubiC</name>
    <name type="ordered locus">BAV1650</name>
</gene>
<proteinExistence type="inferred from homology"/>
<comment type="function">
    <text evidence="1">Removes the pyruvyl group from chorismate, with concomitant aromatization of the ring, to provide 4-hydroxybenzoate (4HB) for the ubiquinone pathway.</text>
</comment>
<comment type="catalytic activity">
    <reaction evidence="1">
        <text>chorismate = 4-hydroxybenzoate + pyruvate</text>
        <dbReference type="Rhea" id="RHEA:16505"/>
        <dbReference type="ChEBI" id="CHEBI:15361"/>
        <dbReference type="ChEBI" id="CHEBI:17879"/>
        <dbReference type="ChEBI" id="CHEBI:29748"/>
        <dbReference type="EC" id="4.1.3.40"/>
    </reaction>
</comment>
<comment type="pathway">
    <text evidence="1">Cofactor biosynthesis; ubiquinone biosynthesis.</text>
</comment>
<comment type="subcellular location">
    <subcellularLocation>
        <location evidence="1">Cytoplasm</location>
    </subcellularLocation>
</comment>
<comment type="similarity">
    <text evidence="1">Belongs to the UbiC family.</text>
</comment>